<name>SYD_SHEB5</name>
<keyword id="KW-0030">Aminoacyl-tRNA synthetase</keyword>
<keyword id="KW-0067">ATP-binding</keyword>
<keyword id="KW-0963">Cytoplasm</keyword>
<keyword id="KW-0436">Ligase</keyword>
<keyword id="KW-0547">Nucleotide-binding</keyword>
<keyword id="KW-0648">Protein biosynthesis</keyword>
<keyword id="KW-1185">Reference proteome</keyword>
<gene>
    <name evidence="1" type="primary">aspS</name>
    <name type="ordered locus">Sbal_2038</name>
</gene>
<reference key="1">
    <citation type="submission" date="2007-02" db="EMBL/GenBank/DDBJ databases">
        <title>Complete sequence of chromosome of Shewanella baltica OS155.</title>
        <authorList>
            <consortium name="US DOE Joint Genome Institute"/>
            <person name="Copeland A."/>
            <person name="Lucas S."/>
            <person name="Lapidus A."/>
            <person name="Barry K."/>
            <person name="Detter J.C."/>
            <person name="Glavina del Rio T."/>
            <person name="Hammon N."/>
            <person name="Israni S."/>
            <person name="Dalin E."/>
            <person name="Tice H."/>
            <person name="Pitluck S."/>
            <person name="Sims D.R."/>
            <person name="Brettin T."/>
            <person name="Bruce D."/>
            <person name="Han C."/>
            <person name="Tapia R."/>
            <person name="Brainard J."/>
            <person name="Schmutz J."/>
            <person name="Larimer F."/>
            <person name="Land M."/>
            <person name="Hauser L."/>
            <person name="Kyrpides N."/>
            <person name="Mikhailova N."/>
            <person name="Brettar I."/>
            <person name="Klappenbach J."/>
            <person name="Konstantinidis K."/>
            <person name="Rodrigues J."/>
            <person name="Tiedje J."/>
            <person name="Richardson P."/>
        </authorList>
    </citation>
    <scope>NUCLEOTIDE SEQUENCE [LARGE SCALE GENOMIC DNA]</scope>
    <source>
        <strain>OS155 / ATCC BAA-1091</strain>
    </source>
</reference>
<organism>
    <name type="scientific">Shewanella baltica (strain OS155 / ATCC BAA-1091)</name>
    <dbReference type="NCBI Taxonomy" id="325240"/>
    <lineage>
        <taxon>Bacteria</taxon>
        <taxon>Pseudomonadati</taxon>
        <taxon>Pseudomonadota</taxon>
        <taxon>Gammaproteobacteria</taxon>
        <taxon>Alteromonadales</taxon>
        <taxon>Shewanellaceae</taxon>
        <taxon>Shewanella</taxon>
    </lineage>
</organism>
<proteinExistence type="inferred from homology"/>
<protein>
    <recommendedName>
        <fullName evidence="1">Aspartate--tRNA ligase</fullName>
        <ecNumber evidence="1">6.1.1.12</ecNumber>
    </recommendedName>
    <alternativeName>
        <fullName evidence="1">Aspartyl-tRNA synthetase</fullName>
        <shortName evidence="1">AspRS</shortName>
    </alternativeName>
</protein>
<accession>A3D477</accession>
<evidence type="ECO:0000255" key="1">
    <source>
        <dbReference type="HAMAP-Rule" id="MF_00044"/>
    </source>
</evidence>
<feature type="chain" id="PRO_1000006753" description="Aspartate--tRNA ligase">
    <location>
        <begin position="1"/>
        <end position="592"/>
    </location>
</feature>
<feature type="region of interest" description="Aspartate" evidence="1">
    <location>
        <begin position="197"/>
        <end position="200"/>
    </location>
</feature>
<feature type="binding site" evidence="1">
    <location>
        <position position="173"/>
    </location>
    <ligand>
        <name>L-aspartate</name>
        <dbReference type="ChEBI" id="CHEBI:29991"/>
    </ligand>
</feature>
<feature type="binding site" evidence="1">
    <location>
        <begin position="219"/>
        <end position="221"/>
    </location>
    <ligand>
        <name>ATP</name>
        <dbReference type="ChEBI" id="CHEBI:30616"/>
    </ligand>
</feature>
<feature type="binding site" evidence="1">
    <location>
        <position position="219"/>
    </location>
    <ligand>
        <name>L-aspartate</name>
        <dbReference type="ChEBI" id="CHEBI:29991"/>
    </ligand>
</feature>
<feature type="binding site" evidence="1">
    <location>
        <position position="228"/>
    </location>
    <ligand>
        <name>ATP</name>
        <dbReference type="ChEBI" id="CHEBI:30616"/>
    </ligand>
</feature>
<feature type="binding site" evidence="1">
    <location>
        <position position="448"/>
    </location>
    <ligand>
        <name>L-aspartate</name>
        <dbReference type="ChEBI" id="CHEBI:29991"/>
    </ligand>
</feature>
<feature type="binding site" evidence="1">
    <location>
        <position position="482"/>
    </location>
    <ligand>
        <name>ATP</name>
        <dbReference type="ChEBI" id="CHEBI:30616"/>
    </ligand>
</feature>
<feature type="binding site" evidence="1">
    <location>
        <position position="489"/>
    </location>
    <ligand>
        <name>L-aspartate</name>
        <dbReference type="ChEBI" id="CHEBI:29991"/>
    </ligand>
</feature>
<feature type="binding site" evidence="1">
    <location>
        <begin position="534"/>
        <end position="537"/>
    </location>
    <ligand>
        <name>ATP</name>
        <dbReference type="ChEBI" id="CHEBI:30616"/>
    </ligand>
</feature>
<dbReference type="EC" id="6.1.1.12" evidence="1"/>
<dbReference type="EMBL" id="CP000563">
    <property type="protein sequence ID" value="ABN61540.1"/>
    <property type="molecule type" value="Genomic_DNA"/>
</dbReference>
<dbReference type="RefSeq" id="WP_011846754.1">
    <property type="nucleotide sequence ID" value="NC_009052.1"/>
</dbReference>
<dbReference type="SMR" id="A3D477"/>
<dbReference type="STRING" id="325240.Sbal_2038"/>
<dbReference type="KEGG" id="sbl:Sbal_2038"/>
<dbReference type="HOGENOM" id="CLU_014330_3_2_6"/>
<dbReference type="OrthoDB" id="9802326at2"/>
<dbReference type="Proteomes" id="UP000001557">
    <property type="component" value="Chromosome"/>
</dbReference>
<dbReference type="GO" id="GO:0005737">
    <property type="term" value="C:cytoplasm"/>
    <property type="evidence" value="ECO:0007669"/>
    <property type="project" value="UniProtKB-SubCell"/>
</dbReference>
<dbReference type="GO" id="GO:0004815">
    <property type="term" value="F:aspartate-tRNA ligase activity"/>
    <property type="evidence" value="ECO:0007669"/>
    <property type="project" value="UniProtKB-UniRule"/>
</dbReference>
<dbReference type="GO" id="GO:0005524">
    <property type="term" value="F:ATP binding"/>
    <property type="evidence" value="ECO:0007669"/>
    <property type="project" value="UniProtKB-UniRule"/>
</dbReference>
<dbReference type="GO" id="GO:0003676">
    <property type="term" value="F:nucleic acid binding"/>
    <property type="evidence" value="ECO:0007669"/>
    <property type="project" value="InterPro"/>
</dbReference>
<dbReference type="GO" id="GO:0006422">
    <property type="term" value="P:aspartyl-tRNA aminoacylation"/>
    <property type="evidence" value="ECO:0007669"/>
    <property type="project" value="UniProtKB-UniRule"/>
</dbReference>
<dbReference type="CDD" id="cd00777">
    <property type="entry name" value="AspRS_core"/>
    <property type="match status" value="1"/>
</dbReference>
<dbReference type="CDD" id="cd04317">
    <property type="entry name" value="EcAspRS_like_N"/>
    <property type="match status" value="1"/>
</dbReference>
<dbReference type="FunFam" id="2.40.50.140:FF:000080">
    <property type="entry name" value="Aspartate--tRNA ligase"/>
    <property type="match status" value="1"/>
</dbReference>
<dbReference type="Gene3D" id="3.30.930.10">
    <property type="entry name" value="Bira Bifunctional Protein, Domain 2"/>
    <property type="match status" value="1"/>
</dbReference>
<dbReference type="Gene3D" id="3.30.1360.30">
    <property type="entry name" value="GAD-like domain"/>
    <property type="match status" value="1"/>
</dbReference>
<dbReference type="Gene3D" id="2.40.50.140">
    <property type="entry name" value="Nucleic acid-binding proteins"/>
    <property type="match status" value="1"/>
</dbReference>
<dbReference type="HAMAP" id="MF_00044">
    <property type="entry name" value="Asp_tRNA_synth_type1"/>
    <property type="match status" value="1"/>
</dbReference>
<dbReference type="InterPro" id="IPR004364">
    <property type="entry name" value="Aa-tRNA-synt_II"/>
</dbReference>
<dbReference type="InterPro" id="IPR006195">
    <property type="entry name" value="aa-tRNA-synth_II"/>
</dbReference>
<dbReference type="InterPro" id="IPR045864">
    <property type="entry name" value="aa-tRNA-synth_II/BPL/LPL"/>
</dbReference>
<dbReference type="InterPro" id="IPR004524">
    <property type="entry name" value="Asp-tRNA-ligase_1"/>
</dbReference>
<dbReference type="InterPro" id="IPR047089">
    <property type="entry name" value="Asp-tRNA-ligase_1_N"/>
</dbReference>
<dbReference type="InterPro" id="IPR002312">
    <property type="entry name" value="Asp/Asn-tRNA-synth_IIb"/>
</dbReference>
<dbReference type="InterPro" id="IPR047090">
    <property type="entry name" value="AspRS_core"/>
</dbReference>
<dbReference type="InterPro" id="IPR004115">
    <property type="entry name" value="GAD-like_sf"/>
</dbReference>
<dbReference type="InterPro" id="IPR029351">
    <property type="entry name" value="GAD_dom"/>
</dbReference>
<dbReference type="InterPro" id="IPR012340">
    <property type="entry name" value="NA-bd_OB-fold"/>
</dbReference>
<dbReference type="InterPro" id="IPR004365">
    <property type="entry name" value="NA-bd_OB_tRNA"/>
</dbReference>
<dbReference type="NCBIfam" id="TIGR00459">
    <property type="entry name" value="aspS_bact"/>
    <property type="match status" value="1"/>
</dbReference>
<dbReference type="NCBIfam" id="NF001750">
    <property type="entry name" value="PRK00476.1"/>
    <property type="match status" value="1"/>
</dbReference>
<dbReference type="PANTHER" id="PTHR22594:SF5">
    <property type="entry name" value="ASPARTATE--TRNA LIGASE, MITOCHONDRIAL"/>
    <property type="match status" value="1"/>
</dbReference>
<dbReference type="PANTHER" id="PTHR22594">
    <property type="entry name" value="ASPARTYL/LYSYL-TRNA SYNTHETASE"/>
    <property type="match status" value="1"/>
</dbReference>
<dbReference type="Pfam" id="PF02938">
    <property type="entry name" value="GAD"/>
    <property type="match status" value="1"/>
</dbReference>
<dbReference type="Pfam" id="PF00152">
    <property type="entry name" value="tRNA-synt_2"/>
    <property type="match status" value="1"/>
</dbReference>
<dbReference type="Pfam" id="PF01336">
    <property type="entry name" value="tRNA_anti-codon"/>
    <property type="match status" value="1"/>
</dbReference>
<dbReference type="PRINTS" id="PR01042">
    <property type="entry name" value="TRNASYNTHASP"/>
</dbReference>
<dbReference type="SUPFAM" id="SSF55681">
    <property type="entry name" value="Class II aaRS and biotin synthetases"/>
    <property type="match status" value="1"/>
</dbReference>
<dbReference type="SUPFAM" id="SSF55261">
    <property type="entry name" value="GAD domain-like"/>
    <property type="match status" value="1"/>
</dbReference>
<dbReference type="SUPFAM" id="SSF50249">
    <property type="entry name" value="Nucleic acid-binding proteins"/>
    <property type="match status" value="1"/>
</dbReference>
<dbReference type="PROSITE" id="PS50862">
    <property type="entry name" value="AA_TRNA_LIGASE_II"/>
    <property type="match status" value="1"/>
</dbReference>
<comment type="function">
    <text evidence="1">Catalyzes the attachment of L-aspartate to tRNA(Asp) in a two-step reaction: L-aspartate is first activated by ATP to form Asp-AMP and then transferred to the acceptor end of tRNA(Asp).</text>
</comment>
<comment type="catalytic activity">
    <reaction evidence="1">
        <text>tRNA(Asp) + L-aspartate + ATP = L-aspartyl-tRNA(Asp) + AMP + diphosphate</text>
        <dbReference type="Rhea" id="RHEA:19649"/>
        <dbReference type="Rhea" id="RHEA-COMP:9660"/>
        <dbReference type="Rhea" id="RHEA-COMP:9678"/>
        <dbReference type="ChEBI" id="CHEBI:29991"/>
        <dbReference type="ChEBI" id="CHEBI:30616"/>
        <dbReference type="ChEBI" id="CHEBI:33019"/>
        <dbReference type="ChEBI" id="CHEBI:78442"/>
        <dbReference type="ChEBI" id="CHEBI:78516"/>
        <dbReference type="ChEBI" id="CHEBI:456215"/>
        <dbReference type="EC" id="6.1.1.12"/>
    </reaction>
</comment>
<comment type="subunit">
    <text evidence="1">Homodimer.</text>
</comment>
<comment type="subcellular location">
    <subcellularLocation>
        <location evidence="1">Cytoplasm</location>
    </subcellularLocation>
</comment>
<comment type="similarity">
    <text evidence="1">Belongs to the class-II aminoacyl-tRNA synthetase family. Type 1 subfamily.</text>
</comment>
<sequence>MRSHYCGDVNKSHVGQEVTLVGWVNRSRDLGGVVFLDLRDREGLIQVVYDPDLPEVFNVASTLRAEFCVQVKGLVRARPDSQVNGQMKTGEIEVLGQALTIINAADPLPLSMDNYQNNSEEQRLKYRYLDLRRPEMAQRLIFRAKVTSSVRRFLDSNGFLDIETPILTKATPEGARDYLVPSRTYKGQFFALPQSPQLFKQLLMMSGFDRYYQIVKCFRDEDLRADRQPEFTQIDIETSFMSSEQVMAKTEEMMRGLFLEMLNVDLGEFPRMTYNEAMRRFGSDKPDLRNPLELVDIADLLKEVEFAVFSGPANDEEGRVAALRIPGGAALSRKQIDDYTKFVGIYGAKGLAWMKINDLSLGLEGIQSPVLKFLNDSIVNEIVSRTGAQTGDIILFGADQATVVAESMGALRLKAGEDFSLLQGEWRPLWVVDFPMFEKINGNFHAVHHPFTAPRGVTAAELEANPANRVSDAYDMVLNGCELGGGSVRIHNQEMQSAVFRILGITDEEAKEKFGFLLEALRYGTPPHAGLAFGLDRIIMLMTGASSIRDVMAFPKTTTAACPLTNAPGFANPQQLAELGIAVVEKAVKTED</sequence>